<feature type="chain" id="PRO_0000078358" description="Stromal 70 kDa heat shock-related protein, chloroplastic">
    <location>
        <begin position="1" status="less than"/>
        <end position="599"/>
    </location>
</feature>
<feature type="region of interest" description="Disordered" evidence="1">
    <location>
        <begin position="545"/>
        <end position="573"/>
    </location>
</feature>
<feature type="compositionally biased region" description="Low complexity" evidence="1">
    <location>
        <begin position="554"/>
        <end position="568"/>
    </location>
</feature>
<feature type="non-terminal residue">
    <location>
        <position position="1"/>
    </location>
</feature>
<comment type="function">
    <text>Interacts with newly imported chloroplast proteins to assist in their maturation.</text>
</comment>
<comment type="subcellular location">
    <subcellularLocation>
        <location>Plastid</location>
        <location>Chloroplast stroma</location>
    </subcellularLocation>
</comment>
<comment type="similarity">
    <text evidence="2">Belongs to the heat shock protein 70 family.</text>
</comment>
<reference key="1">
    <citation type="journal article" date="1993" name="Plant Physiol.">
        <title>Characteristics of an Hsp70 homolog localized in higher plant chloroplasts that is similar to DnaK, the Hsp70 of prokaryotes.</title>
        <authorList>
            <person name="Wang H."/>
            <person name="Goffreda M."/>
            <person name="Leustek T."/>
        </authorList>
    </citation>
    <scope>NUCLEOTIDE SEQUENCE [MRNA]</scope>
</reference>
<proteinExistence type="evidence at transcript level"/>
<name>HSP7S_SPIOL</name>
<evidence type="ECO:0000256" key="1">
    <source>
        <dbReference type="SAM" id="MobiDB-lite"/>
    </source>
</evidence>
<evidence type="ECO:0000305" key="2"/>
<gene>
    <name type="primary">CHSP70</name>
</gene>
<keyword id="KW-0067">ATP-binding</keyword>
<keyword id="KW-0150">Chloroplast</keyword>
<keyword id="KW-0547">Nucleotide-binding</keyword>
<keyword id="KW-0934">Plastid</keyword>
<keyword id="KW-1185">Reference proteome</keyword>
<keyword id="KW-0346">Stress response</keyword>
<organism>
    <name type="scientific">Spinacia oleracea</name>
    <name type="common">Spinach</name>
    <dbReference type="NCBI Taxonomy" id="3562"/>
    <lineage>
        <taxon>Eukaryota</taxon>
        <taxon>Viridiplantae</taxon>
        <taxon>Streptophyta</taxon>
        <taxon>Embryophyta</taxon>
        <taxon>Tracheophyta</taxon>
        <taxon>Spermatophyta</taxon>
        <taxon>Magnoliopsida</taxon>
        <taxon>eudicotyledons</taxon>
        <taxon>Gunneridae</taxon>
        <taxon>Pentapetalae</taxon>
        <taxon>Caryophyllales</taxon>
        <taxon>Chenopodiaceae</taxon>
        <taxon>Chenopodioideae</taxon>
        <taxon>Anserineae</taxon>
        <taxon>Spinacia</taxon>
    </lineage>
</organism>
<dbReference type="EMBL" id="M99565">
    <property type="protein sequence ID" value="AAA18570.1"/>
    <property type="molecule type" value="mRNA"/>
</dbReference>
<dbReference type="PIR" id="T09119">
    <property type="entry name" value="T09119"/>
</dbReference>
<dbReference type="SMR" id="Q08080"/>
<dbReference type="Proteomes" id="UP001155700">
    <property type="component" value="Unplaced"/>
</dbReference>
<dbReference type="GO" id="GO:0009507">
    <property type="term" value="C:chloroplast"/>
    <property type="evidence" value="ECO:0000318"/>
    <property type="project" value="GO_Central"/>
</dbReference>
<dbReference type="GO" id="GO:0009570">
    <property type="term" value="C:chloroplast stroma"/>
    <property type="evidence" value="ECO:0007669"/>
    <property type="project" value="UniProtKB-SubCell"/>
</dbReference>
<dbReference type="GO" id="GO:0005524">
    <property type="term" value="F:ATP binding"/>
    <property type="evidence" value="ECO:0007669"/>
    <property type="project" value="UniProtKB-KW"/>
</dbReference>
<dbReference type="GO" id="GO:0016887">
    <property type="term" value="F:ATP hydrolysis activity"/>
    <property type="evidence" value="ECO:0000318"/>
    <property type="project" value="GO_Central"/>
</dbReference>
<dbReference type="GO" id="GO:0140662">
    <property type="term" value="F:ATP-dependent protein folding chaperone"/>
    <property type="evidence" value="ECO:0007669"/>
    <property type="project" value="InterPro"/>
</dbReference>
<dbReference type="GO" id="GO:0031072">
    <property type="term" value="F:heat shock protein binding"/>
    <property type="evidence" value="ECO:0000318"/>
    <property type="project" value="GO_Central"/>
</dbReference>
<dbReference type="GO" id="GO:0044183">
    <property type="term" value="F:protein folding chaperone"/>
    <property type="evidence" value="ECO:0000318"/>
    <property type="project" value="GO_Central"/>
</dbReference>
<dbReference type="GO" id="GO:0051082">
    <property type="term" value="F:unfolded protein binding"/>
    <property type="evidence" value="ECO:0007669"/>
    <property type="project" value="InterPro"/>
</dbReference>
<dbReference type="GO" id="GO:0051085">
    <property type="term" value="P:chaperone cofactor-dependent protein refolding"/>
    <property type="evidence" value="ECO:0000318"/>
    <property type="project" value="GO_Central"/>
</dbReference>
<dbReference type="GO" id="GO:0042026">
    <property type="term" value="P:protein refolding"/>
    <property type="evidence" value="ECO:0000318"/>
    <property type="project" value="GO_Central"/>
</dbReference>
<dbReference type="CDD" id="cd10234">
    <property type="entry name" value="ASKHA_NBD_HSP70_DnaK-like"/>
    <property type="match status" value="1"/>
</dbReference>
<dbReference type="FunFam" id="3.30.420.40:FF:000545">
    <property type="entry name" value="Endoplasmic reticulum chaperone BiP"/>
    <property type="match status" value="1"/>
</dbReference>
<dbReference type="FunFam" id="1.20.1270.10:FF:000001">
    <property type="entry name" value="Molecular chaperone DnaK"/>
    <property type="match status" value="1"/>
</dbReference>
<dbReference type="FunFam" id="3.90.640.10:FF:000003">
    <property type="entry name" value="Molecular chaperone DnaK"/>
    <property type="match status" value="1"/>
</dbReference>
<dbReference type="FunFam" id="2.60.34.10:FF:000008">
    <property type="entry name" value="Stromal 70 kDa heat shock-related protein"/>
    <property type="match status" value="1"/>
</dbReference>
<dbReference type="Gene3D" id="1.20.1270.10">
    <property type="match status" value="1"/>
</dbReference>
<dbReference type="Gene3D" id="3.30.420.40">
    <property type="match status" value="2"/>
</dbReference>
<dbReference type="Gene3D" id="3.90.640.10">
    <property type="entry name" value="Actin, Chain A, domain 4"/>
    <property type="match status" value="1"/>
</dbReference>
<dbReference type="Gene3D" id="2.60.34.10">
    <property type="entry name" value="Substrate Binding Domain Of DNAk, Chain A, domain 1"/>
    <property type="match status" value="1"/>
</dbReference>
<dbReference type="InterPro" id="IPR043129">
    <property type="entry name" value="ATPase_NBD"/>
</dbReference>
<dbReference type="InterPro" id="IPR012725">
    <property type="entry name" value="Chaperone_DnaK"/>
</dbReference>
<dbReference type="InterPro" id="IPR018181">
    <property type="entry name" value="Heat_shock_70_CS"/>
</dbReference>
<dbReference type="InterPro" id="IPR029048">
    <property type="entry name" value="HSP70_C_sf"/>
</dbReference>
<dbReference type="InterPro" id="IPR029047">
    <property type="entry name" value="HSP70_peptide-bd_sf"/>
</dbReference>
<dbReference type="InterPro" id="IPR013126">
    <property type="entry name" value="Hsp_70_fam"/>
</dbReference>
<dbReference type="NCBIfam" id="NF001413">
    <property type="entry name" value="PRK00290.1"/>
    <property type="match status" value="1"/>
</dbReference>
<dbReference type="NCBIfam" id="TIGR02350">
    <property type="entry name" value="prok_dnaK"/>
    <property type="match status" value="1"/>
</dbReference>
<dbReference type="PANTHER" id="PTHR19375">
    <property type="entry name" value="HEAT SHOCK PROTEIN 70KDA"/>
    <property type="match status" value="1"/>
</dbReference>
<dbReference type="Pfam" id="PF00012">
    <property type="entry name" value="HSP70"/>
    <property type="match status" value="1"/>
</dbReference>
<dbReference type="PRINTS" id="PR00301">
    <property type="entry name" value="HEATSHOCK70"/>
</dbReference>
<dbReference type="SUPFAM" id="SSF53067">
    <property type="entry name" value="Actin-like ATPase domain"/>
    <property type="match status" value="2"/>
</dbReference>
<dbReference type="SUPFAM" id="SSF100934">
    <property type="entry name" value="Heat shock protein 70kD (HSP70), C-terminal subdomain"/>
    <property type="match status" value="1"/>
</dbReference>
<dbReference type="SUPFAM" id="SSF100920">
    <property type="entry name" value="Heat shock protein 70kD (HSP70), peptide-binding domain"/>
    <property type="match status" value="1"/>
</dbReference>
<dbReference type="PROSITE" id="PS00329">
    <property type="entry name" value="HSP70_2"/>
    <property type="match status" value="1"/>
</dbReference>
<dbReference type="PROSITE" id="PS01036">
    <property type="entry name" value="HSP70_3"/>
    <property type="match status" value="1"/>
</dbReference>
<accession>Q08080</accession>
<sequence length="599" mass="64900">EASSVVNPENTFFSVKRFIGRKMTEVDEESKQVSYTVVRDENNNVKLECPAIGKQFAAEEISAQVLRKLVDDASKFLNDKVTKAVVTVPAYFNDSQRTATKDAGRIAGLEVLRIINEPTAASLAYGFEKKNNETILVFDLGGGTFDVSVLEVGDGVFEVLSTSGDTHLGGDDFDKRIVDWLASSFKRDEGIDLLKDKQALQRLTETAEKAKMELSSLTQANISLPFITATADGPKHIETTLTRAKFEELWSDLLDRLRTPVENSLRDAKLSFSDLDEVILVGGSTRIPAVIELVKKMTGKAPNVTVNPDEVVALGAAVQAGVLAGDVSDIVLLDVTPLSIGLETLGGVMTKIIPRNTTLPTSKSEVFSTAADGQTSVEINVLQGEREFVRDNKSLGSFRLDGIPPAPRGVPQVEVKFDIDANGILSVTAIDKGTGKKQDITITGASTLPGDEVERMVSEAEKFAKEDKEKREVIDTKNQADSVVYQTEKQLKELGEKVPVPVKEKVEAKLGELKDAINGGETQAIKDAMAALNQEVMQLGQSLYNQPGAGGEPGAAQAQHQEQSSARQIQRAKDPKEMLLMLTSQTASELVEEVVSKMH</sequence>
<protein>
    <recommendedName>
        <fullName>Stromal 70 kDa heat shock-related protein, chloroplastic</fullName>
    </recommendedName>
</protein>